<gene>
    <name evidence="1" type="primary">rplM</name>
    <name type="ordered locus">BPEN_050</name>
</gene>
<protein>
    <recommendedName>
        <fullName evidence="1">Large ribosomal subunit protein uL13</fullName>
    </recommendedName>
    <alternativeName>
        <fullName evidence="2">50S ribosomal protein L13</fullName>
    </alternativeName>
</protein>
<feature type="chain" id="PRO_1000073412" description="Large ribosomal subunit protein uL13">
    <location>
        <begin position="1"/>
        <end position="144"/>
    </location>
</feature>
<proteinExistence type="inferred from homology"/>
<dbReference type="EMBL" id="CP000016">
    <property type="protein sequence ID" value="AAZ40698.1"/>
    <property type="molecule type" value="Genomic_DNA"/>
</dbReference>
<dbReference type="RefSeq" id="WP_011282604.1">
    <property type="nucleotide sequence ID" value="NC_007292.1"/>
</dbReference>
<dbReference type="SMR" id="Q493Y6"/>
<dbReference type="STRING" id="291272.BPEN_050"/>
<dbReference type="KEGG" id="bpn:BPEN_050"/>
<dbReference type="eggNOG" id="COG0102">
    <property type="taxonomic scope" value="Bacteria"/>
</dbReference>
<dbReference type="HOGENOM" id="CLU_082184_2_2_6"/>
<dbReference type="OrthoDB" id="9801330at2"/>
<dbReference type="Proteomes" id="UP000007794">
    <property type="component" value="Chromosome"/>
</dbReference>
<dbReference type="GO" id="GO:0022625">
    <property type="term" value="C:cytosolic large ribosomal subunit"/>
    <property type="evidence" value="ECO:0007669"/>
    <property type="project" value="TreeGrafter"/>
</dbReference>
<dbReference type="GO" id="GO:0003729">
    <property type="term" value="F:mRNA binding"/>
    <property type="evidence" value="ECO:0007669"/>
    <property type="project" value="TreeGrafter"/>
</dbReference>
<dbReference type="GO" id="GO:0003735">
    <property type="term" value="F:structural constituent of ribosome"/>
    <property type="evidence" value="ECO:0007669"/>
    <property type="project" value="InterPro"/>
</dbReference>
<dbReference type="GO" id="GO:0017148">
    <property type="term" value="P:negative regulation of translation"/>
    <property type="evidence" value="ECO:0007669"/>
    <property type="project" value="TreeGrafter"/>
</dbReference>
<dbReference type="GO" id="GO:0006412">
    <property type="term" value="P:translation"/>
    <property type="evidence" value="ECO:0007669"/>
    <property type="project" value="UniProtKB-UniRule"/>
</dbReference>
<dbReference type="CDD" id="cd00392">
    <property type="entry name" value="Ribosomal_L13"/>
    <property type="match status" value="1"/>
</dbReference>
<dbReference type="FunFam" id="3.90.1180.10:FF:000001">
    <property type="entry name" value="50S ribosomal protein L13"/>
    <property type="match status" value="1"/>
</dbReference>
<dbReference type="Gene3D" id="3.90.1180.10">
    <property type="entry name" value="Ribosomal protein L13"/>
    <property type="match status" value="1"/>
</dbReference>
<dbReference type="HAMAP" id="MF_01366">
    <property type="entry name" value="Ribosomal_uL13"/>
    <property type="match status" value="1"/>
</dbReference>
<dbReference type="InterPro" id="IPR005822">
    <property type="entry name" value="Ribosomal_uL13"/>
</dbReference>
<dbReference type="InterPro" id="IPR005823">
    <property type="entry name" value="Ribosomal_uL13_bac-type"/>
</dbReference>
<dbReference type="InterPro" id="IPR023563">
    <property type="entry name" value="Ribosomal_uL13_CS"/>
</dbReference>
<dbReference type="InterPro" id="IPR036899">
    <property type="entry name" value="Ribosomal_uL13_sf"/>
</dbReference>
<dbReference type="NCBIfam" id="TIGR01066">
    <property type="entry name" value="rplM_bact"/>
    <property type="match status" value="1"/>
</dbReference>
<dbReference type="PANTHER" id="PTHR11545:SF2">
    <property type="entry name" value="LARGE RIBOSOMAL SUBUNIT PROTEIN UL13M"/>
    <property type="match status" value="1"/>
</dbReference>
<dbReference type="PANTHER" id="PTHR11545">
    <property type="entry name" value="RIBOSOMAL PROTEIN L13"/>
    <property type="match status" value="1"/>
</dbReference>
<dbReference type="Pfam" id="PF00572">
    <property type="entry name" value="Ribosomal_L13"/>
    <property type="match status" value="1"/>
</dbReference>
<dbReference type="PIRSF" id="PIRSF002181">
    <property type="entry name" value="Ribosomal_L13"/>
    <property type="match status" value="1"/>
</dbReference>
<dbReference type="SUPFAM" id="SSF52161">
    <property type="entry name" value="Ribosomal protein L13"/>
    <property type="match status" value="1"/>
</dbReference>
<dbReference type="PROSITE" id="PS00783">
    <property type="entry name" value="RIBOSOMAL_L13"/>
    <property type="match status" value="1"/>
</dbReference>
<reference key="1">
    <citation type="journal article" date="2005" name="Genome Res.">
        <title>Genome sequence of Blochmannia pennsylvanicus indicates parallel evolutionary trends among bacterial mutualists of insects.</title>
        <authorList>
            <person name="Degnan P.H."/>
            <person name="Lazarus A.B."/>
            <person name="Wernegreen J.J."/>
        </authorList>
    </citation>
    <scope>NUCLEOTIDE SEQUENCE [LARGE SCALE GENOMIC DNA]</scope>
    <source>
        <strain>BPEN</strain>
    </source>
</reference>
<evidence type="ECO:0000255" key="1">
    <source>
        <dbReference type="HAMAP-Rule" id="MF_01366"/>
    </source>
</evidence>
<evidence type="ECO:0000305" key="2"/>
<sequence>MKTFMAKSHVIKKTWYIIDAKHKILGRLSTVISRYLIGKHKIEYAPHVDIGDYVIVLNAKEVSVSGHKRDDKIYYHHTGYIGGIKQLNFKRMINRYPEKVIEIAVKGMLPKGPLGRMMYCRLRVYSGNVHAHAAQEPQFIDIDC</sequence>
<name>RL13_BLOPB</name>
<comment type="function">
    <text evidence="1">This protein is one of the early assembly proteins of the 50S ribosomal subunit, although it is not seen to bind rRNA by itself. It is important during the early stages of 50S assembly.</text>
</comment>
<comment type="subunit">
    <text evidence="1">Part of the 50S ribosomal subunit.</text>
</comment>
<comment type="similarity">
    <text evidence="1">Belongs to the universal ribosomal protein uL13 family.</text>
</comment>
<accession>Q493Y6</accession>
<organism>
    <name type="scientific">Blochmanniella pennsylvanica (strain BPEN)</name>
    <dbReference type="NCBI Taxonomy" id="291272"/>
    <lineage>
        <taxon>Bacteria</taxon>
        <taxon>Pseudomonadati</taxon>
        <taxon>Pseudomonadota</taxon>
        <taxon>Gammaproteobacteria</taxon>
        <taxon>Enterobacterales</taxon>
        <taxon>Enterobacteriaceae</taxon>
        <taxon>ant endosymbionts</taxon>
        <taxon>Candidatus Blochmanniella</taxon>
    </lineage>
</organism>
<keyword id="KW-1185">Reference proteome</keyword>
<keyword id="KW-0687">Ribonucleoprotein</keyword>
<keyword id="KW-0689">Ribosomal protein</keyword>